<gene>
    <name type="ordered locus">Spro_1532</name>
</gene>
<dbReference type="EMBL" id="CP000826">
    <property type="protein sequence ID" value="ABV40636.1"/>
    <property type="molecule type" value="Genomic_DNA"/>
</dbReference>
<dbReference type="STRING" id="399741.Spro_1532"/>
<dbReference type="KEGG" id="spe:Spro_1532"/>
<dbReference type="eggNOG" id="COG3811">
    <property type="taxonomic scope" value="Bacteria"/>
</dbReference>
<dbReference type="HOGENOM" id="CLU_164736_0_0_6"/>
<dbReference type="OrthoDB" id="7204880at2"/>
<dbReference type="HAMAP" id="MF_00827">
    <property type="entry name" value="UPF0386"/>
    <property type="match status" value="1"/>
</dbReference>
<dbReference type="InterPro" id="IPR018654">
    <property type="entry name" value="YjhX_toxin"/>
</dbReference>
<dbReference type="NCBIfam" id="NF010240">
    <property type="entry name" value="PRK13687.1"/>
    <property type="match status" value="1"/>
</dbReference>
<dbReference type="Pfam" id="PF09857">
    <property type="entry name" value="YjhX_toxin"/>
    <property type="match status" value="1"/>
</dbReference>
<accession>A8GBZ6</accession>
<name>Y1532_SERP5</name>
<organism>
    <name type="scientific">Serratia proteamaculans (strain 568)</name>
    <dbReference type="NCBI Taxonomy" id="399741"/>
    <lineage>
        <taxon>Bacteria</taxon>
        <taxon>Pseudomonadati</taxon>
        <taxon>Pseudomonadota</taxon>
        <taxon>Gammaproteobacteria</taxon>
        <taxon>Enterobacterales</taxon>
        <taxon>Yersiniaceae</taxon>
        <taxon>Serratia</taxon>
    </lineage>
</organism>
<feature type="chain" id="PRO_1000062711" description="UPF0386 protein Spro_1532">
    <location>
        <begin position="1"/>
        <end position="85"/>
    </location>
</feature>
<evidence type="ECO:0000255" key="1">
    <source>
        <dbReference type="HAMAP-Rule" id="MF_00827"/>
    </source>
</evidence>
<reference key="1">
    <citation type="submission" date="2007-09" db="EMBL/GenBank/DDBJ databases">
        <title>Complete sequence of chromosome of Serratia proteamaculans 568.</title>
        <authorList>
            <consortium name="US DOE Joint Genome Institute"/>
            <person name="Copeland A."/>
            <person name="Lucas S."/>
            <person name="Lapidus A."/>
            <person name="Barry K."/>
            <person name="Glavina del Rio T."/>
            <person name="Dalin E."/>
            <person name="Tice H."/>
            <person name="Pitluck S."/>
            <person name="Chain P."/>
            <person name="Malfatti S."/>
            <person name="Shin M."/>
            <person name="Vergez L."/>
            <person name="Schmutz J."/>
            <person name="Larimer F."/>
            <person name="Land M."/>
            <person name="Hauser L."/>
            <person name="Kyrpides N."/>
            <person name="Kim E."/>
            <person name="Taghavi S."/>
            <person name="Newman L."/>
            <person name="Vangronsveld J."/>
            <person name="van der Lelie D."/>
            <person name="Richardson P."/>
        </authorList>
    </citation>
    <scope>NUCLEOTIDE SEQUENCE [LARGE SCALE GENOMIC DNA]</scope>
    <source>
        <strain>568</strain>
    </source>
</reference>
<proteinExistence type="inferred from homology"/>
<comment type="similarity">
    <text evidence="1">Belongs to the UPF0386 family.</text>
</comment>
<sequence>MNISKAEQRVLHVLAKGGYIAFTRDDAGRVTHVQCLTREGLGLADCSLAVFTKLKTKRLILSRQGRPYRVTIDGLKAVRAQLDNR</sequence>
<protein>
    <recommendedName>
        <fullName evidence="1">UPF0386 protein Spro_1532</fullName>
    </recommendedName>
</protein>